<feature type="chain" id="PRO_0000201451" description="Hydrogenase maturation factor HypD">
    <location>
        <begin position="1"/>
        <end position="373"/>
    </location>
</feature>
<feature type="binding site" evidence="9">
    <location>
        <position position="41"/>
    </location>
    <ligand>
        <name>Fe cation</name>
        <dbReference type="ChEBI" id="CHEBI:24875"/>
    </ligand>
</feature>
<feature type="binding site" evidence="8 9">
    <location>
        <position position="69"/>
    </location>
    <ligand>
        <name>Fe cation</name>
        <dbReference type="ChEBI" id="CHEBI:24875"/>
    </ligand>
</feature>
<feature type="binding site" evidence="8 9">
    <location>
        <position position="72"/>
    </location>
    <ligand>
        <name>Fe cation</name>
        <dbReference type="ChEBI" id="CHEBI:24875"/>
    </ligand>
</feature>
<feature type="mutagenesis site" description="Does not affect interaction with HypC. Retains the 4Fe-4S cluster, but has less iron than the native complex. Can no longer coordinate CN(-1) and CO." evidence="4 5">
    <original>C</original>
    <variation>A</variation>
    <location>
        <position position="41"/>
    </location>
</feature>
<feature type="mutagenesis site" description="Can no longer coordinate CN(-1) and CO. Reduces iron content." evidence="5">
    <original>C</original>
    <variation>A</variation>
    <location>
        <position position="69"/>
    </location>
</feature>
<feature type="mutagenesis site" description="Can no longer coordinate CN(-1) and CO. Reduces iron content." evidence="5">
    <original>C</original>
    <variation>A</variation>
    <location>
        <position position="72"/>
    </location>
</feature>
<feature type="mutagenesis site" description="Does not affect CN(-1) and CO coordination." evidence="5">
    <original>E</original>
    <variation>A</variation>
    <variation>D</variation>
    <location>
        <position position="357"/>
    </location>
</feature>
<gene>
    <name evidence="6" type="primary">hypD</name>
    <name type="ordered locus">b2729</name>
    <name type="ordered locus">JW2699</name>
</gene>
<reference key="1">
    <citation type="journal article" date="1991" name="Mol. Microbiol.">
        <title>Molecular characterization of an operon (hyp) necessary for the activity of the three hydrogenase isoenzymes in Escherichia coli.</title>
        <authorList>
            <person name="Lutz S."/>
            <person name="Jacobi A."/>
            <person name="Schlensog V."/>
            <person name="Boehm R."/>
            <person name="Sawers G."/>
            <person name="Boeck A."/>
        </authorList>
    </citation>
    <scope>NUCLEOTIDE SEQUENCE [GENOMIC DNA]</scope>
</reference>
<reference key="2">
    <citation type="journal article" date="1997" name="Science">
        <title>The complete genome sequence of Escherichia coli K-12.</title>
        <authorList>
            <person name="Blattner F.R."/>
            <person name="Plunkett G. III"/>
            <person name="Bloch C.A."/>
            <person name="Perna N.T."/>
            <person name="Burland V."/>
            <person name="Riley M."/>
            <person name="Collado-Vides J."/>
            <person name="Glasner J.D."/>
            <person name="Rode C.K."/>
            <person name="Mayhew G.F."/>
            <person name="Gregor J."/>
            <person name="Davis N.W."/>
            <person name="Kirkpatrick H.A."/>
            <person name="Goeden M.A."/>
            <person name="Rose D.J."/>
            <person name="Mau B."/>
            <person name="Shao Y."/>
        </authorList>
    </citation>
    <scope>NUCLEOTIDE SEQUENCE [LARGE SCALE GENOMIC DNA]</scope>
    <source>
        <strain>K12 / MG1655 / ATCC 47076</strain>
    </source>
</reference>
<reference key="3">
    <citation type="journal article" date="2006" name="Mol. Syst. Biol.">
        <title>Highly accurate genome sequences of Escherichia coli K-12 strains MG1655 and W3110.</title>
        <authorList>
            <person name="Hayashi K."/>
            <person name="Morooka N."/>
            <person name="Yamamoto Y."/>
            <person name="Fujita K."/>
            <person name="Isono K."/>
            <person name="Choi S."/>
            <person name="Ohtsubo E."/>
            <person name="Baba T."/>
            <person name="Wanner B.L."/>
            <person name="Mori H."/>
            <person name="Horiuchi T."/>
        </authorList>
    </citation>
    <scope>NUCLEOTIDE SEQUENCE [LARGE SCALE GENOMIC DNA]</scope>
    <source>
        <strain>K12 / W3110 / ATCC 27325 / DSM 5911</strain>
    </source>
</reference>
<reference key="4">
    <citation type="journal article" date="1997" name="Electrophoresis">
        <title>Escherichia coli proteome analysis using the gene-protein database.</title>
        <authorList>
            <person name="VanBogelen R.A."/>
            <person name="Abshire K.Z."/>
            <person name="Moldover B."/>
            <person name="Olson E.R."/>
            <person name="Neidhardt F.C."/>
        </authorList>
    </citation>
    <scope>IDENTIFICATION BY 2D-GEL</scope>
</reference>
<reference key="5">
    <citation type="journal article" date="2002" name="J. Mol. Biol.">
        <title>Maturation of [NiFe]-hydrogenases in Escherichia coli: the HypC cycle.</title>
        <authorList>
            <person name="Blokesch M."/>
            <person name="Boeck A."/>
        </authorList>
    </citation>
    <scope>INTERACTION WITH HYPC</scope>
</reference>
<reference key="6">
    <citation type="journal article" date="2004" name="J. Mol. Biol.">
        <title>The complex between hydrogenase-maturation proteins HypC and HypD is an intermediate in the supply of cyanide to the active site iron of [NiFe]-hydrogenases.</title>
        <authorList>
            <person name="Blokesch M."/>
            <person name="Albracht S.P."/>
            <person name="Matzanke B.F."/>
            <person name="Drapal N.M."/>
            <person name="Jacobi A."/>
            <person name="Boeck A."/>
        </authorList>
    </citation>
    <scope>FUNCTION</scope>
    <scope>COFACTOR</scope>
    <scope>SUBUNIT</scope>
    <scope>INTERACTION WITH HYPC AND HYPE</scope>
</reference>
<reference key="7">
    <citation type="journal article" date="2006" name="FEBS Lett.">
        <title>Interactions of the Escherichia coli hydrogenase biosynthetic proteins: HybG complex formation.</title>
        <authorList>
            <person name="Butland G."/>
            <person name="Zhang J.W."/>
            <person name="Yang W."/>
            <person name="Sheung A."/>
            <person name="Wong P."/>
            <person name="Greenblatt J.F."/>
            <person name="Emili A."/>
            <person name="Zamble D.B."/>
        </authorList>
    </citation>
    <scope>INTERACTION WITH HYBG AND HYPE</scope>
</reference>
<reference key="8">
    <citation type="journal article" date="2012" name="FEBS Lett.">
        <title>[NiFe]-hydrogenase maturation: isolation of a HypC-HypD complex carrying diatomic CO and CN- ligands.</title>
        <authorList>
            <person name="Soboh B."/>
            <person name="Stripp S.T."/>
            <person name="Muhr E."/>
            <person name="Granich C."/>
            <person name="Braussemann M."/>
            <person name="Herzberg M."/>
            <person name="Heberle J."/>
            <person name="Gary Sawers R."/>
        </authorList>
    </citation>
    <scope>FUNCTION</scope>
    <scope>COFACTOR</scope>
    <scope>INTERACTION WITH HYPC</scope>
    <scope>MUTAGENESIS OF CYS-41</scope>
</reference>
<reference key="9">
    <citation type="journal article" date="2013" name="Biochemistry">
        <title>HypD is the scaffold protein for Fe-(CN)2CO cofactor assembly in [NiFe]-hydrogenase maturation.</title>
        <authorList>
            <person name="Stripp S.T."/>
            <person name="Soboh B."/>
            <person name="Lindenstrauss U."/>
            <person name="Braussemann M."/>
            <person name="Herzberg M."/>
            <person name="Nies D.H."/>
            <person name="Sawers R.G."/>
            <person name="Heberle J."/>
        </authorList>
    </citation>
    <scope>FUNCTION</scope>
    <scope>IRON-BINDING</scope>
    <scope>MUTAGENESIS OF CYS-41; CYS-69; CYS-72 AND GLU-357</scope>
</reference>
<proteinExistence type="evidence at protein level"/>
<dbReference type="EMBL" id="X54543">
    <property type="protein sequence ID" value="CAA38415.1"/>
    <property type="molecule type" value="Genomic_DNA"/>
</dbReference>
<dbReference type="EMBL" id="U29579">
    <property type="protein sequence ID" value="AAA69239.1"/>
    <property type="molecule type" value="Genomic_DNA"/>
</dbReference>
<dbReference type="EMBL" id="U00096">
    <property type="protein sequence ID" value="AAC75771.1"/>
    <property type="molecule type" value="Genomic_DNA"/>
</dbReference>
<dbReference type="EMBL" id="AP009048">
    <property type="protein sequence ID" value="BAE76806.1"/>
    <property type="molecule type" value="Genomic_DNA"/>
</dbReference>
<dbReference type="PIR" id="S15200">
    <property type="entry name" value="S15200"/>
</dbReference>
<dbReference type="RefSeq" id="NP_417209.1">
    <property type="nucleotide sequence ID" value="NC_000913.3"/>
</dbReference>
<dbReference type="RefSeq" id="WP_001212985.1">
    <property type="nucleotide sequence ID" value="NZ_LN832404.1"/>
</dbReference>
<dbReference type="SMR" id="P24192"/>
<dbReference type="BioGRID" id="4261425">
    <property type="interactions" value="38"/>
</dbReference>
<dbReference type="BioGRID" id="851521">
    <property type="interactions" value="1"/>
</dbReference>
<dbReference type="ComplexPortal" id="CPX-5283">
    <property type="entry name" value="Hybg-HypDE Ni-hydrogenase maturation complex"/>
</dbReference>
<dbReference type="ComplexPortal" id="CPX-5284">
    <property type="entry name" value="HypCDE Ni-hydrogenase maturation complex"/>
</dbReference>
<dbReference type="DIP" id="DIP-9998N"/>
<dbReference type="FunCoup" id="P24192">
    <property type="interactions" value="59"/>
</dbReference>
<dbReference type="IntAct" id="P24192">
    <property type="interactions" value="12"/>
</dbReference>
<dbReference type="STRING" id="511145.b2729"/>
<dbReference type="jPOST" id="P24192"/>
<dbReference type="PaxDb" id="511145-b2729"/>
<dbReference type="EnsemblBacteria" id="AAC75771">
    <property type="protein sequence ID" value="AAC75771"/>
    <property type="gene ID" value="b2729"/>
</dbReference>
<dbReference type="GeneID" id="947189"/>
<dbReference type="KEGG" id="ecj:JW2699"/>
<dbReference type="KEGG" id="eco:b2729"/>
<dbReference type="KEGG" id="ecoc:C3026_15015"/>
<dbReference type="PATRIC" id="fig|1411691.4.peg.4012"/>
<dbReference type="EchoBASE" id="EB0481"/>
<dbReference type="eggNOG" id="COG0409">
    <property type="taxonomic scope" value="Bacteria"/>
</dbReference>
<dbReference type="HOGENOM" id="CLU_048562_1_0_6"/>
<dbReference type="InParanoid" id="P24192"/>
<dbReference type="OMA" id="FICPGHV"/>
<dbReference type="OrthoDB" id="9770424at2"/>
<dbReference type="PhylomeDB" id="P24192"/>
<dbReference type="BioCyc" id="EcoCyc:EG10486-MONOMER"/>
<dbReference type="BioCyc" id="MetaCyc:EG10486-MONOMER"/>
<dbReference type="UniPathway" id="UPA00335"/>
<dbReference type="PRO" id="PR:P24192"/>
<dbReference type="Proteomes" id="UP000000625">
    <property type="component" value="Chromosome"/>
</dbReference>
<dbReference type="GO" id="GO:0051539">
    <property type="term" value="F:4 iron, 4 sulfur cluster binding"/>
    <property type="evidence" value="ECO:0000314"/>
    <property type="project" value="EcoCyc"/>
</dbReference>
<dbReference type="GO" id="GO:0016887">
    <property type="term" value="F:ATP hydrolysis activity"/>
    <property type="evidence" value="ECO:0000314"/>
    <property type="project" value="EcoCyc"/>
</dbReference>
<dbReference type="GO" id="GO:0070025">
    <property type="term" value="F:carbon monoxide binding"/>
    <property type="evidence" value="ECO:0000314"/>
    <property type="project" value="EcoCyc"/>
</dbReference>
<dbReference type="GO" id="GO:0005506">
    <property type="term" value="F:iron ion binding"/>
    <property type="evidence" value="ECO:0000314"/>
    <property type="project" value="EcoCyc"/>
</dbReference>
<dbReference type="GO" id="GO:0051604">
    <property type="term" value="P:protein maturation"/>
    <property type="evidence" value="ECO:0000315"/>
    <property type="project" value="EcoCyc"/>
</dbReference>
<dbReference type="GO" id="GO:0065003">
    <property type="term" value="P:protein-containing complex assembly"/>
    <property type="evidence" value="ECO:0000314"/>
    <property type="project" value="ComplexPortal"/>
</dbReference>
<dbReference type="FunFam" id="3.40.50.11740:FF:000001">
    <property type="entry name" value="Hydrogenase maturation factor"/>
    <property type="match status" value="1"/>
</dbReference>
<dbReference type="FunFam" id="3.40.50.11740:FF:000002">
    <property type="entry name" value="Hydrogenase maturation factor"/>
    <property type="match status" value="1"/>
</dbReference>
<dbReference type="Gene3D" id="6.10.20.100">
    <property type="match status" value="1"/>
</dbReference>
<dbReference type="Gene3D" id="3.40.50.11740">
    <property type="entry name" value="HypD, alpha/beta domain 2"/>
    <property type="match status" value="2"/>
</dbReference>
<dbReference type="InterPro" id="IPR002780">
    <property type="entry name" value="Hyd_form_HypD"/>
</dbReference>
<dbReference type="InterPro" id="IPR042243">
    <property type="entry name" value="HypD_1"/>
</dbReference>
<dbReference type="InterPro" id="IPR042244">
    <property type="entry name" value="HypD_2_sf"/>
</dbReference>
<dbReference type="NCBIfam" id="TIGR00075">
    <property type="entry name" value="hypD"/>
    <property type="match status" value="1"/>
</dbReference>
<dbReference type="PANTHER" id="PTHR30149:SF0">
    <property type="entry name" value="HYDROGENASE MATURATION FACTOR HYPD"/>
    <property type="match status" value="1"/>
</dbReference>
<dbReference type="PANTHER" id="PTHR30149">
    <property type="entry name" value="HYDROGENASE PROTEIN ASSEMBLY PROTEIN HYPD"/>
    <property type="match status" value="1"/>
</dbReference>
<dbReference type="Pfam" id="PF01924">
    <property type="entry name" value="HypD"/>
    <property type="match status" value="1"/>
</dbReference>
<dbReference type="PIRSF" id="PIRSF005622">
    <property type="entry name" value="Hydrgn_mat_hypD"/>
    <property type="match status" value="1"/>
</dbReference>
<sequence>MRFVDEYRAPEQVMQLIEHLRERASHLSYTAERPLRIMEVCGGHTHAIFKFGLDQLLPENVEFIHGPGCPVCVLPMGRIDTCVEIASHPEVIFCTFGDAMRVPGKQGSLLQAKARGADVRIVYSPMDALKLAQENPTRKVVFFGLGFETTMPTTAITLQQAKARDVQNFYFFCQHITLIPTLRSLLEQPDNGIDAFLAPGHVSMVIGTDAYNFIASDFHRPLVVAGFEPLDLLQGVVMLVQQKIAAHSKVENQYRRVVPDAGNLLAQQAIADVFCVNGDSEWRGLGVIESSGVHLTPDYQRFDAEAHFRPAPQQVCDDPRARCGEVLTGKCKPHQCPLFGNTCNPQTAFGALMVSSEGACAAWYQYRQQESEA</sequence>
<evidence type="ECO:0000269" key="1">
    <source>
    </source>
</evidence>
<evidence type="ECO:0000269" key="2">
    <source>
    </source>
</evidence>
<evidence type="ECO:0000269" key="3">
    <source>
    </source>
</evidence>
<evidence type="ECO:0000269" key="4">
    <source>
    </source>
</evidence>
<evidence type="ECO:0000269" key="5">
    <source>
    </source>
</evidence>
<evidence type="ECO:0000303" key="6">
    <source>
    </source>
</evidence>
<evidence type="ECO:0000305" key="7"/>
<evidence type="ECO:0000305" key="8">
    <source>
    </source>
</evidence>
<evidence type="ECO:0000305" key="9">
    <source>
    </source>
</evidence>
<organism>
    <name type="scientific">Escherichia coli (strain K12)</name>
    <dbReference type="NCBI Taxonomy" id="83333"/>
    <lineage>
        <taxon>Bacteria</taxon>
        <taxon>Pseudomonadati</taxon>
        <taxon>Pseudomonadota</taxon>
        <taxon>Gammaproteobacteria</taxon>
        <taxon>Enterobacterales</taxon>
        <taxon>Enterobacteriaceae</taxon>
        <taxon>Escherichia</taxon>
    </lineage>
</organism>
<name>HYPD_ECOLI</name>
<comment type="function">
    <text evidence="2 4 5 7">Involved in the maturation of [NiFe] hydrogenases. Involved in the biosynthesis of the Fe(CN)(2)CO cofactor (PubMed:15504408, PubMed:23022438). HypD may act as a scaffold on which the Fe(CN)(2)CO cofactor is formed (PubMed:23597401). In complex with HypC, accepts the cyanide ligand generated by HypF and HypE, and also coordinates the carbon monoxide ligand (PubMed:15504408, PubMed:23022438). Required for the formation of all three hydrogenase isoenzymes (Probable).</text>
</comment>
<comment type="cofactor">
    <cofactor evidence="2 4">
        <name>[4Fe-4S] cluster</name>
        <dbReference type="ChEBI" id="CHEBI:49883"/>
    </cofactor>
</comment>
<comment type="pathway">
    <text evidence="7">Protein modification; [NiFe] hydrogenase maturation.</text>
</comment>
<comment type="subunit">
    <text evidence="1 2 3 4">Monomer (PubMed:15504408). Interacts with HypC (PubMed:12441107, PubMed:15504408, PubMed:23022438). Forms a complex with HypC, or HybG, and HypE (PubMed:15504408, PubMed:16412426).</text>
</comment>
<comment type="interaction">
    <interactant intactId="EBI-552711">
        <id>P24192</id>
    </interactant>
    <interactant intactId="EBI-562426">
        <id>P0AAM7</id>
        <label>hybG</label>
    </interactant>
    <organismsDiffer>false</organismsDiffer>
    <experiments>7</experiments>
</comment>
<comment type="domain">
    <text evidence="4">In addition to the iron-sulfur cluster, contains two additional oxygen-labile iron ions.</text>
</comment>
<comment type="similarity">
    <text evidence="7">Belongs to the HypD family.</text>
</comment>
<accession>P24192</accession>
<accession>Q2MAA0</accession>
<accession>Q46885</accession>
<protein>
    <recommendedName>
        <fullName evidence="7">Hydrogenase maturation factor HypD</fullName>
    </recommendedName>
    <alternativeName>
        <fullName evidence="7">Hydrogenase isoenzymes formation protein HypD</fullName>
    </alternativeName>
</protein>
<keyword id="KW-0004">4Fe-4S</keyword>
<keyword id="KW-0408">Iron</keyword>
<keyword id="KW-0411">Iron-sulfur</keyword>
<keyword id="KW-0479">Metal-binding</keyword>
<keyword id="KW-1185">Reference proteome</keyword>